<dbReference type="EC" id="2.7.7.56" evidence="1"/>
<dbReference type="EMBL" id="CP000509">
    <property type="protein sequence ID" value="ABL80837.1"/>
    <property type="molecule type" value="Genomic_DNA"/>
</dbReference>
<dbReference type="RefSeq" id="WP_011754785.1">
    <property type="nucleotide sequence ID" value="NC_008699.1"/>
</dbReference>
<dbReference type="SMR" id="A1SGA2"/>
<dbReference type="STRING" id="196162.Noca_1323"/>
<dbReference type="KEGG" id="nca:Noca_1323"/>
<dbReference type="eggNOG" id="COG0689">
    <property type="taxonomic scope" value="Bacteria"/>
</dbReference>
<dbReference type="HOGENOM" id="CLU_050858_0_0_11"/>
<dbReference type="OrthoDB" id="9802265at2"/>
<dbReference type="Proteomes" id="UP000000640">
    <property type="component" value="Chromosome"/>
</dbReference>
<dbReference type="GO" id="GO:0000175">
    <property type="term" value="F:3'-5'-RNA exonuclease activity"/>
    <property type="evidence" value="ECO:0007669"/>
    <property type="project" value="UniProtKB-UniRule"/>
</dbReference>
<dbReference type="GO" id="GO:0000049">
    <property type="term" value="F:tRNA binding"/>
    <property type="evidence" value="ECO:0007669"/>
    <property type="project" value="UniProtKB-UniRule"/>
</dbReference>
<dbReference type="GO" id="GO:0009022">
    <property type="term" value="F:tRNA nucleotidyltransferase activity"/>
    <property type="evidence" value="ECO:0007669"/>
    <property type="project" value="UniProtKB-UniRule"/>
</dbReference>
<dbReference type="GO" id="GO:0016075">
    <property type="term" value="P:rRNA catabolic process"/>
    <property type="evidence" value="ECO:0007669"/>
    <property type="project" value="UniProtKB-UniRule"/>
</dbReference>
<dbReference type="GO" id="GO:0006364">
    <property type="term" value="P:rRNA processing"/>
    <property type="evidence" value="ECO:0007669"/>
    <property type="project" value="UniProtKB-KW"/>
</dbReference>
<dbReference type="GO" id="GO:0008033">
    <property type="term" value="P:tRNA processing"/>
    <property type="evidence" value="ECO:0007669"/>
    <property type="project" value="UniProtKB-UniRule"/>
</dbReference>
<dbReference type="CDD" id="cd11362">
    <property type="entry name" value="RNase_PH_bact"/>
    <property type="match status" value="1"/>
</dbReference>
<dbReference type="FunFam" id="3.30.230.70:FF:000003">
    <property type="entry name" value="Ribonuclease PH"/>
    <property type="match status" value="1"/>
</dbReference>
<dbReference type="Gene3D" id="3.30.230.70">
    <property type="entry name" value="GHMP Kinase, N-terminal domain"/>
    <property type="match status" value="1"/>
</dbReference>
<dbReference type="HAMAP" id="MF_00564">
    <property type="entry name" value="RNase_PH"/>
    <property type="match status" value="1"/>
</dbReference>
<dbReference type="InterPro" id="IPR001247">
    <property type="entry name" value="ExoRNase_PH_dom1"/>
</dbReference>
<dbReference type="InterPro" id="IPR015847">
    <property type="entry name" value="ExoRNase_PH_dom2"/>
</dbReference>
<dbReference type="InterPro" id="IPR036345">
    <property type="entry name" value="ExoRNase_PH_dom2_sf"/>
</dbReference>
<dbReference type="InterPro" id="IPR027408">
    <property type="entry name" value="PNPase/RNase_PH_dom_sf"/>
</dbReference>
<dbReference type="InterPro" id="IPR020568">
    <property type="entry name" value="Ribosomal_Su5_D2-typ_SF"/>
</dbReference>
<dbReference type="InterPro" id="IPR050080">
    <property type="entry name" value="RNase_PH"/>
</dbReference>
<dbReference type="InterPro" id="IPR002381">
    <property type="entry name" value="RNase_PH_bac-type"/>
</dbReference>
<dbReference type="InterPro" id="IPR018336">
    <property type="entry name" value="RNase_PH_CS"/>
</dbReference>
<dbReference type="NCBIfam" id="TIGR01966">
    <property type="entry name" value="RNasePH"/>
    <property type="match status" value="1"/>
</dbReference>
<dbReference type="PANTHER" id="PTHR11953">
    <property type="entry name" value="EXOSOME COMPLEX COMPONENT"/>
    <property type="match status" value="1"/>
</dbReference>
<dbReference type="PANTHER" id="PTHR11953:SF0">
    <property type="entry name" value="EXOSOME COMPLEX COMPONENT RRP41"/>
    <property type="match status" value="1"/>
</dbReference>
<dbReference type="Pfam" id="PF01138">
    <property type="entry name" value="RNase_PH"/>
    <property type="match status" value="1"/>
</dbReference>
<dbReference type="Pfam" id="PF03725">
    <property type="entry name" value="RNase_PH_C"/>
    <property type="match status" value="1"/>
</dbReference>
<dbReference type="SUPFAM" id="SSF55666">
    <property type="entry name" value="Ribonuclease PH domain 2-like"/>
    <property type="match status" value="1"/>
</dbReference>
<dbReference type="SUPFAM" id="SSF54211">
    <property type="entry name" value="Ribosomal protein S5 domain 2-like"/>
    <property type="match status" value="1"/>
</dbReference>
<dbReference type="PROSITE" id="PS01277">
    <property type="entry name" value="RIBONUCLEASE_PH"/>
    <property type="match status" value="1"/>
</dbReference>
<organism>
    <name type="scientific">Nocardioides sp. (strain ATCC BAA-499 / JS614)</name>
    <dbReference type="NCBI Taxonomy" id="196162"/>
    <lineage>
        <taxon>Bacteria</taxon>
        <taxon>Bacillati</taxon>
        <taxon>Actinomycetota</taxon>
        <taxon>Actinomycetes</taxon>
        <taxon>Propionibacteriales</taxon>
        <taxon>Nocardioidaceae</taxon>
        <taxon>Nocardioides</taxon>
    </lineage>
</organism>
<sequence length="242" mass="25671">MSAAPREDGRADDELRPITITRHWLDHAAGSVLVEFGRTRVLCAASAAEGVPRWRKGSGLGWVTAEYAMLPASTNTRSDRESVKGRIGGRTHEISRLIGRSLRAIIDYKALGENTIQLDCDVLQADGGTRTAAITGAYVALADAVEHLRSTGALTGEPLTGSVAAVSVGIIDGVPRLDLPYVEDVRAETDMNVVMTGSGKFVEVQGTAEGAAFDRAELDALLALAEKGCADLTRLQQEALSR</sequence>
<protein>
    <recommendedName>
        <fullName evidence="1">Ribonuclease PH</fullName>
        <shortName evidence="1">RNase PH</shortName>
        <ecNumber evidence="1">2.7.7.56</ecNumber>
    </recommendedName>
    <alternativeName>
        <fullName evidence="1">tRNA nucleotidyltransferase</fullName>
    </alternativeName>
</protein>
<proteinExistence type="inferred from homology"/>
<gene>
    <name evidence="1" type="primary">rph</name>
    <name type="ordered locus">Noca_1323</name>
</gene>
<name>RNPH_NOCSJ</name>
<evidence type="ECO:0000255" key="1">
    <source>
        <dbReference type="HAMAP-Rule" id="MF_00564"/>
    </source>
</evidence>
<reference key="1">
    <citation type="submission" date="2006-12" db="EMBL/GenBank/DDBJ databases">
        <title>Complete sequence of chromosome 1 of Nocardioides sp. JS614.</title>
        <authorList>
            <person name="Copeland A."/>
            <person name="Lucas S."/>
            <person name="Lapidus A."/>
            <person name="Barry K."/>
            <person name="Detter J.C."/>
            <person name="Glavina del Rio T."/>
            <person name="Hammon N."/>
            <person name="Israni S."/>
            <person name="Dalin E."/>
            <person name="Tice H."/>
            <person name="Pitluck S."/>
            <person name="Thompson L.S."/>
            <person name="Brettin T."/>
            <person name="Bruce D."/>
            <person name="Han C."/>
            <person name="Tapia R."/>
            <person name="Schmutz J."/>
            <person name="Larimer F."/>
            <person name="Land M."/>
            <person name="Hauser L."/>
            <person name="Kyrpides N."/>
            <person name="Kim E."/>
            <person name="Mattes T."/>
            <person name="Gossett J."/>
            <person name="Richardson P."/>
        </authorList>
    </citation>
    <scope>NUCLEOTIDE SEQUENCE [LARGE SCALE GENOMIC DNA]</scope>
    <source>
        <strain>ATCC BAA-499 / JS614</strain>
    </source>
</reference>
<comment type="function">
    <text evidence="1">Phosphorolytic 3'-5' exoribonuclease that plays an important role in tRNA 3'-end maturation. Removes nucleotide residues following the 3'-CCA terminus of tRNAs; can also add nucleotides to the ends of RNA molecules by using nucleoside diphosphates as substrates, but this may not be physiologically important. Probably plays a role in initiation of 16S rRNA degradation (leading to ribosome degradation) during starvation.</text>
</comment>
<comment type="catalytic activity">
    <reaction evidence="1">
        <text>tRNA(n+1) + phosphate = tRNA(n) + a ribonucleoside 5'-diphosphate</text>
        <dbReference type="Rhea" id="RHEA:10628"/>
        <dbReference type="Rhea" id="RHEA-COMP:17343"/>
        <dbReference type="Rhea" id="RHEA-COMP:17344"/>
        <dbReference type="ChEBI" id="CHEBI:43474"/>
        <dbReference type="ChEBI" id="CHEBI:57930"/>
        <dbReference type="ChEBI" id="CHEBI:173114"/>
        <dbReference type="EC" id="2.7.7.56"/>
    </reaction>
</comment>
<comment type="subunit">
    <text evidence="1">Homohexameric ring arranged as a trimer of dimers.</text>
</comment>
<comment type="similarity">
    <text evidence="1">Belongs to the RNase PH family.</text>
</comment>
<accession>A1SGA2</accession>
<keyword id="KW-0548">Nucleotidyltransferase</keyword>
<keyword id="KW-1185">Reference proteome</keyword>
<keyword id="KW-0694">RNA-binding</keyword>
<keyword id="KW-0698">rRNA processing</keyword>
<keyword id="KW-0808">Transferase</keyword>
<keyword id="KW-0819">tRNA processing</keyword>
<keyword id="KW-0820">tRNA-binding</keyword>
<feature type="chain" id="PRO_1000024844" description="Ribonuclease PH">
    <location>
        <begin position="1"/>
        <end position="242"/>
    </location>
</feature>
<feature type="binding site" evidence="1">
    <location>
        <position position="90"/>
    </location>
    <ligand>
        <name>phosphate</name>
        <dbReference type="ChEBI" id="CHEBI:43474"/>
        <note>substrate</note>
    </ligand>
</feature>
<feature type="binding site" evidence="1">
    <location>
        <begin position="128"/>
        <end position="130"/>
    </location>
    <ligand>
        <name>phosphate</name>
        <dbReference type="ChEBI" id="CHEBI:43474"/>
        <note>substrate</note>
    </ligand>
</feature>